<dbReference type="EMBL" id="U87804">
    <property type="protein sequence ID" value="AAB51267.1"/>
    <property type="molecule type" value="Genomic_DNA"/>
</dbReference>
<dbReference type="EMBL" id="CP001340">
    <property type="protein sequence ID" value="ACL97334.1"/>
    <property type="molecule type" value="Genomic_DNA"/>
</dbReference>
<dbReference type="RefSeq" id="WP_010921580.1">
    <property type="nucleotide sequence ID" value="NC_011916.1"/>
</dbReference>
<dbReference type="RefSeq" id="YP_002519242.1">
    <property type="nucleotide sequence ID" value="NC_011916.1"/>
</dbReference>
<dbReference type="SMR" id="B8GW31"/>
<dbReference type="IntAct" id="B8GW31">
    <property type="interactions" value="2"/>
</dbReference>
<dbReference type="MINT" id="B8GW31"/>
<dbReference type="GeneID" id="7332717"/>
<dbReference type="KEGG" id="ccs:CCNA_03869"/>
<dbReference type="PATRIC" id="fig|565050.3.peg.3774"/>
<dbReference type="HOGENOM" id="CLU_037612_1_4_5"/>
<dbReference type="OrthoDB" id="9815116at2"/>
<dbReference type="PhylomeDB" id="B8GW31"/>
<dbReference type="Proteomes" id="UP000001364">
    <property type="component" value="Chromosome"/>
</dbReference>
<dbReference type="GO" id="GO:0005524">
    <property type="term" value="F:ATP binding"/>
    <property type="evidence" value="ECO:0007669"/>
    <property type="project" value="UniProtKB-KW"/>
</dbReference>
<dbReference type="GO" id="GO:0007059">
    <property type="term" value="P:chromosome segregation"/>
    <property type="evidence" value="ECO:0007669"/>
    <property type="project" value="UniProtKB-KW"/>
</dbReference>
<dbReference type="CDD" id="cd02042">
    <property type="entry name" value="ParAB_family"/>
    <property type="match status" value="1"/>
</dbReference>
<dbReference type="FunFam" id="3.40.50.300:FF:000285">
    <property type="entry name" value="Sporulation initiation inhibitor Soj"/>
    <property type="match status" value="1"/>
</dbReference>
<dbReference type="Gene3D" id="3.40.50.300">
    <property type="entry name" value="P-loop containing nucleotide triphosphate hydrolases"/>
    <property type="match status" value="1"/>
</dbReference>
<dbReference type="InterPro" id="IPR025669">
    <property type="entry name" value="AAA_dom"/>
</dbReference>
<dbReference type="InterPro" id="IPR050678">
    <property type="entry name" value="DNA_Partitioning_ATPase"/>
</dbReference>
<dbReference type="InterPro" id="IPR027417">
    <property type="entry name" value="P-loop_NTPase"/>
</dbReference>
<dbReference type="PANTHER" id="PTHR13696">
    <property type="entry name" value="P-LOOP CONTAINING NUCLEOSIDE TRIPHOSPHATE HYDROLASE"/>
    <property type="match status" value="1"/>
</dbReference>
<dbReference type="PANTHER" id="PTHR13696:SF52">
    <property type="entry name" value="PARA FAMILY PROTEIN CT_582"/>
    <property type="match status" value="1"/>
</dbReference>
<dbReference type="Pfam" id="PF13614">
    <property type="entry name" value="AAA_31"/>
    <property type="match status" value="1"/>
</dbReference>
<dbReference type="PIRSF" id="PIRSF009320">
    <property type="entry name" value="Nuc_binding_HP_1000"/>
    <property type="match status" value="1"/>
</dbReference>
<dbReference type="SUPFAM" id="SSF52540">
    <property type="entry name" value="P-loop containing nucleoside triphosphate hydrolases"/>
    <property type="match status" value="1"/>
</dbReference>
<keyword id="KW-0067">ATP-binding</keyword>
<keyword id="KW-0159">Chromosome partition</keyword>
<keyword id="KW-0547">Nucleotide-binding</keyword>
<keyword id="KW-1185">Reference proteome</keyword>
<feature type="chain" id="PRO_0000378300" description="Chromosome partitioning protein ParA">
    <location>
        <begin position="1"/>
        <end position="267"/>
    </location>
</feature>
<feature type="binding site" evidence="1">
    <location>
        <begin position="14"/>
        <end position="21"/>
    </location>
    <ligand>
        <name>ATP</name>
        <dbReference type="ChEBI" id="CHEBI:30616"/>
    </ligand>
</feature>
<feature type="sequence conflict" description="In Ref. 1; AAB51267." evidence="2" ref="1">
    <original>LAAC</original>
    <variation>WAL</variation>
    <location>
        <begin position="31"/>
        <end position="34"/>
    </location>
</feature>
<feature type="sequence conflict" description="In Ref. 1; AAB51267." evidence="2" ref="1">
    <original>RG</original>
    <variation>AR</variation>
    <location>
        <begin position="175"/>
        <end position="176"/>
    </location>
</feature>
<feature type="sequence conflict" description="In Ref. 1; AAB51267." evidence="2" ref="1">
    <original>M</original>
    <variation>I</variation>
    <location>
        <position position="191"/>
    </location>
</feature>
<comment type="function">
    <text>Involved in chromosome partition. Localize to both poles of the predivisional cell following completion of DNA replication.</text>
</comment>
<comment type="interaction">
    <interactant intactId="EBI-8183380">
        <id>B8GW31</id>
    </interactant>
    <interactant intactId="EBI-6468999">
        <id>A0A0H3C899</id>
        <label>tipN</label>
    </interactant>
    <organismsDiffer>false</organismsDiffer>
    <experiments>3</experiments>
</comment>
<comment type="similarity">
    <text evidence="2">Belongs to the ParA family.</text>
</comment>
<evidence type="ECO:0000255" key="1"/>
<evidence type="ECO:0000305" key="2"/>
<reference key="1">
    <citation type="journal article" date="1997" name="Cell">
        <title>Cell cycle-dependent polar localization of chromosome partitioning proteins in Caulobacter crescentus.</title>
        <authorList>
            <person name="Mohl D.A."/>
            <person name="Gober J.W."/>
        </authorList>
    </citation>
    <scope>NUCLEOTIDE SEQUENCE [GENOMIC DNA]</scope>
</reference>
<reference key="2">
    <citation type="journal article" date="2010" name="J. Bacteriol.">
        <title>The genetic basis of laboratory adaptation in Caulobacter crescentus.</title>
        <authorList>
            <person name="Marks M.E."/>
            <person name="Castro-Rojas C.M."/>
            <person name="Teiling C."/>
            <person name="Du L."/>
            <person name="Kapatral V."/>
            <person name="Walunas T.L."/>
            <person name="Crosson S."/>
        </authorList>
    </citation>
    <scope>NUCLEOTIDE SEQUENCE [LARGE SCALE GENOMIC DNA]</scope>
    <source>
        <strain>NA1000 / CB15N</strain>
    </source>
</reference>
<sequence length="267" mass="28870">MSANPLRVLAIANQKGGVGKTTTAINLGTALAACGERVLLIDADPQGNCSTGLGIGRTQRRTTLYDVLMGEAPVVDAAVKTELPGLDVIPADADLSGVEIELGQTARRSYRLRDALEAIRANGPYTYVLIDCPPSLNVLTVNAMTAADAVFVPLQCEFFALEGLTQLMRTIERVRGSLNPRLEIQGVVLTMYDRRNSLSEQVAKDVRAHFGDKVYDAVIPRNVRVSEAPSFGKPVLLYDLKCAGSQAYLKLAREVISRERDRQAKAA</sequence>
<accession>B8GW31</accession>
<accession>O05189</accession>
<protein>
    <recommendedName>
        <fullName>Chromosome partitioning protein ParA</fullName>
    </recommendedName>
</protein>
<name>PARA_CAUVN</name>
<organism>
    <name type="scientific">Caulobacter vibrioides (strain NA1000 / CB15N)</name>
    <name type="common">Caulobacter crescentus</name>
    <dbReference type="NCBI Taxonomy" id="565050"/>
    <lineage>
        <taxon>Bacteria</taxon>
        <taxon>Pseudomonadati</taxon>
        <taxon>Pseudomonadota</taxon>
        <taxon>Alphaproteobacteria</taxon>
        <taxon>Caulobacterales</taxon>
        <taxon>Caulobacteraceae</taxon>
        <taxon>Caulobacter</taxon>
    </lineage>
</organism>
<gene>
    <name type="primary">parA</name>
    <name type="ordered locus">CCNA_03869</name>
</gene>
<proteinExistence type="evidence at protein level"/>